<gene>
    <name type="primary">MRPL49</name>
    <name type="ordered locus">YJL096W</name>
    <name type="ORF">J0904</name>
</gene>
<comment type="function">
    <text evidence="11 12">Component of the mitochondrial ribosome (mitoribosome), a dedicated translation machinery responsible for the synthesis of mitochondrial genome-encoded proteins, including at least some of the essential transmembrane subunits of the mitochondrial respiratory chain. The mitoribosomes are attached to the mitochondrial inner membrane and translation products are cotranslationally integrated into the membrane.</text>
</comment>
<comment type="subunit">
    <text evidence="2 6 8">Component of the mitochondrial large ribosomal subunit (mt-LSU). Mature yeast 74S mitochondrial ribosomes consist of a small (37S) and a large (54S) subunit. The 37S small subunit contains a 15S ribosomal RNA (15S mt-rRNA) and 34 different proteins. The 54S large subunit contains a 21S rRNA (21S mt-rRNA) and 46 different proteins.</text>
</comment>
<comment type="subcellular location">
    <subcellularLocation>
        <location evidence="3 5">Mitochondrion</location>
    </subcellularLocation>
    <text evidence="7">Mitoribosomes are tethered to the mitochondrial inner membrane and spatially aligned with the membrane insertion machinery through two distinct membrane contact sites, formed by the 21S rRNA expansion segment 96-ES1 and the inner membrane protein MBA1.</text>
</comment>
<comment type="miscellaneous">
    <text evidence="4">Present with 1850 molecules/cell in log phase SD medium.</text>
</comment>
<comment type="similarity">
    <text evidence="10">Belongs to the bacterial ribosomal protein bL21 family.</text>
</comment>
<comment type="sequence caution" evidence="10">
    <conflict type="erroneous initiation">
        <sequence resource="EMBL-CDS" id="AAS56631"/>
    </conflict>
</comment>
<comment type="sequence caution" evidence="10">
    <conflict type="erroneous initiation">
        <sequence resource="EMBL-CDS" id="CAA54894"/>
    </conflict>
</comment>
<comment type="sequence caution" evidence="10">
    <conflict type="erroneous initiation">
        <sequence resource="EMBL-CDS" id="CAA89390"/>
    </conflict>
</comment>
<accession>P40858</accession>
<accession>D6VW88</accession>
<protein>
    <recommendedName>
        <fullName evidence="9">Large ribosomal subunit protein bL21m</fullName>
    </recommendedName>
    <alternativeName>
        <fullName>54S ribosomal protein L49, mitochondrial</fullName>
    </alternativeName>
    <alternativeName>
        <fullName>YmL49</fullName>
    </alternativeName>
</protein>
<name>RN49_YEAST</name>
<reference key="1">
    <citation type="journal article" date="1994" name="Yeast">
        <title>Sequence and function analysis of a 9.74 kb fragment of Saccharomyces cerevisiae chromosome X including the BCK1 gene.</title>
        <authorList>
            <person name="Miosga T."/>
            <person name="Boles E."/>
            <person name="Schaaff-Gerstenschlaeger I."/>
            <person name="Schmitt S."/>
            <person name="Zimmermann F.K."/>
        </authorList>
    </citation>
    <scope>NUCLEOTIDE SEQUENCE [GENOMIC DNA]</scope>
    <source>
        <strain>ATCC 204508 / S288c</strain>
    </source>
</reference>
<reference key="2">
    <citation type="journal article" date="1996" name="EMBO J.">
        <title>Complete nucleotide sequence of Saccharomyces cerevisiae chromosome X.</title>
        <authorList>
            <person name="Galibert F."/>
            <person name="Alexandraki D."/>
            <person name="Baur A."/>
            <person name="Boles E."/>
            <person name="Chalwatzis N."/>
            <person name="Chuat J.-C."/>
            <person name="Coster F."/>
            <person name="Cziepluch C."/>
            <person name="de Haan M."/>
            <person name="Domdey H."/>
            <person name="Durand P."/>
            <person name="Entian K.-D."/>
            <person name="Gatius M."/>
            <person name="Goffeau A."/>
            <person name="Grivell L.A."/>
            <person name="Hennemann A."/>
            <person name="Herbert C.J."/>
            <person name="Heumann K."/>
            <person name="Hilger F."/>
            <person name="Hollenberg C.P."/>
            <person name="Huang M.-E."/>
            <person name="Jacq C."/>
            <person name="Jauniaux J.-C."/>
            <person name="Katsoulou C."/>
            <person name="Kirchrath L."/>
            <person name="Kleine K."/>
            <person name="Kordes E."/>
            <person name="Koetter P."/>
            <person name="Liebl S."/>
            <person name="Louis E.J."/>
            <person name="Manus V."/>
            <person name="Mewes H.-W."/>
            <person name="Miosga T."/>
            <person name="Obermaier B."/>
            <person name="Perea J."/>
            <person name="Pohl T.M."/>
            <person name="Portetelle D."/>
            <person name="Pujol A."/>
            <person name="Purnelle B."/>
            <person name="Ramezani Rad M."/>
            <person name="Rasmussen S.W."/>
            <person name="Rose M."/>
            <person name="Rossau R."/>
            <person name="Schaaff-Gerstenschlaeger I."/>
            <person name="Smits P.H.M."/>
            <person name="Scarcez T."/>
            <person name="Soriano N."/>
            <person name="To Van D."/>
            <person name="Tzermia M."/>
            <person name="Van Broekhoven A."/>
            <person name="Vandenbol M."/>
            <person name="Wedler H."/>
            <person name="von Wettstein D."/>
            <person name="Wambutt R."/>
            <person name="Zagulski M."/>
            <person name="Zollner A."/>
            <person name="Karpfinger-Hartl L."/>
        </authorList>
    </citation>
    <scope>NUCLEOTIDE SEQUENCE [LARGE SCALE GENOMIC DNA]</scope>
    <source>
        <strain>ATCC 204508 / S288c</strain>
    </source>
</reference>
<reference key="3">
    <citation type="journal article" date="2014" name="G3 (Bethesda)">
        <title>The reference genome sequence of Saccharomyces cerevisiae: Then and now.</title>
        <authorList>
            <person name="Engel S.R."/>
            <person name="Dietrich F.S."/>
            <person name="Fisk D.G."/>
            <person name="Binkley G."/>
            <person name="Balakrishnan R."/>
            <person name="Costanzo M.C."/>
            <person name="Dwight S.S."/>
            <person name="Hitz B.C."/>
            <person name="Karra K."/>
            <person name="Nash R.S."/>
            <person name="Weng S."/>
            <person name="Wong E.D."/>
            <person name="Lloyd P."/>
            <person name="Skrzypek M.S."/>
            <person name="Miyasato S.R."/>
            <person name="Simison M."/>
            <person name="Cherry J.M."/>
        </authorList>
    </citation>
    <scope>GENOME REANNOTATION</scope>
    <source>
        <strain>ATCC 204508 / S288c</strain>
    </source>
</reference>
<reference key="4">
    <citation type="journal article" date="2007" name="Genome Res.">
        <title>Approaching a complete repository of sequence-verified protein-encoding clones for Saccharomyces cerevisiae.</title>
        <authorList>
            <person name="Hu Y."/>
            <person name="Rolfs A."/>
            <person name="Bhullar B."/>
            <person name="Murthy T.V.S."/>
            <person name="Zhu C."/>
            <person name="Berger M.F."/>
            <person name="Camargo A.A."/>
            <person name="Kelley F."/>
            <person name="McCarron S."/>
            <person name="Jepson D."/>
            <person name="Richardson A."/>
            <person name="Raphael J."/>
            <person name="Moreira D."/>
            <person name="Taycher E."/>
            <person name="Zuo D."/>
            <person name="Mohr S."/>
            <person name="Kane M.F."/>
            <person name="Williamson J."/>
            <person name="Simpson A.J.G."/>
            <person name="Bulyk M.L."/>
            <person name="Harlow E."/>
            <person name="Marsischky G."/>
            <person name="Kolodner R.D."/>
            <person name="LaBaer J."/>
        </authorList>
    </citation>
    <scope>NUCLEOTIDE SEQUENCE [GENOMIC DNA]</scope>
    <source>
        <strain>ATCC 204508 / S288c</strain>
    </source>
</reference>
<reference key="5">
    <citation type="journal article" date="1997" name="Eur. J. Biochem.">
        <title>Identification and characterization of the genes for mitochondrial ribosomal proteins of Saccharomyces cerevisiae.</title>
        <authorList>
            <person name="Kitakawa M."/>
            <person name="Graack H.-R."/>
            <person name="Grohmann L."/>
            <person name="Goldschmidt-Reisin S."/>
            <person name="Herfurth E."/>
            <person name="Wittmann-Liebold B."/>
            <person name="Nishimura T."/>
            <person name="Isono K."/>
        </authorList>
    </citation>
    <scope>PROTEIN SEQUENCE OF 104-117</scope>
    <scope>SUBUNIT</scope>
    <source>
        <strain>07173</strain>
    </source>
</reference>
<reference key="6">
    <citation type="journal article" date="2002" name="Eur. J. Biochem.">
        <title>Tag-mediated isolation of yeast mitochondrial ribosome and mass spectrometric identification of its new components.</title>
        <authorList>
            <person name="Gan X."/>
            <person name="Kitakawa M."/>
            <person name="Yoshino K."/>
            <person name="Oshiro N."/>
            <person name="Yonezawa K."/>
            <person name="Isono K."/>
        </authorList>
    </citation>
    <scope>IDENTIFICATION IN THE MITOCHONDRIAL RIBOSOMAL LARGE COMPLEX</scope>
    <scope>IDENTIFICATION BY MASS SPECTROMETRY</scope>
</reference>
<reference key="7">
    <citation type="journal article" date="2003" name="Nature">
        <title>Sequencing and comparison of yeast species to identify genes and regulatory elements.</title>
        <authorList>
            <person name="Kellis M."/>
            <person name="Patterson N."/>
            <person name="Endrizzi M."/>
            <person name="Birren B.W."/>
            <person name="Lander E.S."/>
        </authorList>
    </citation>
    <scope>IDENTIFICATION OF PROBABLE INITIATION SITE</scope>
</reference>
<reference key="8">
    <citation type="journal article" date="2003" name="Nature">
        <title>Global analysis of protein localization in budding yeast.</title>
        <authorList>
            <person name="Huh W.-K."/>
            <person name="Falvo J.V."/>
            <person name="Gerke L.C."/>
            <person name="Carroll A.S."/>
            <person name="Howson R.W."/>
            <person name="Weissman J.S."/>
            <person name="O'Shea E.K."/>
        </authorList>
    </citation>
    <scope>SUBCELLULAR LOCATION [LARGE SCALE ANALYSIS]</scope>
</reference>
<reference key="9">
    <citation type="journal article" date="2003" name="Nature">
        <title>Global analysis of protein expression in yeast.</title>
        <authorList>
            <person name="Ghaemmaghami S."/>
            <person name="Huh W.-K."/>
            <person name="Bower K."/>
            <person name="Howson R.W."/>
            <person name="Belle A."/>
            <person name="Dephoure N."/>
            <person name="O'Shea E.K."/>
            <person name="Weissman J.S."/>
        </authorList>
    </citation>
    <scope>LEVEL OF PROTEIN EXPRESSION [LARGE SCALE ANALYSIS]</scope>
</reference>
<reference key="10">
    <citation type="journal article" date="2003" name="Proc. Natl. Acad. Sci. U.S.A.">
        <title>The proteome of Saccharomyces cerevisiae mitochondria.</title>
        <authorList>
            <person name="Sickmann A."/>
            <person name="Reinders J."/>
            <person name="Wagner Y."/>
            <person name="Joppich C."/>
            <person name="Zahedi R.P."/>
            <person name="Meyer H.E."/>
            <person name="Schoenfisch B."/>
            <person name="Perschil I."/>
            <person name="Chacinska A."/>
            <person name="Guiard B."/>
            <person name="Rehling P."/>
            <person name="Pfanner N."/>
            <person name="Meisinger C."/>
        </authorList>
    </citation>
    <scope>SUBCELLULAR LOCATION [LARGE SCALE ANALYSIS]</scope>
    <source>
        <strain>ATCC 76625 / YPH499</strain>
    </source>
</reference>
<reference key="11">
    <citation type="journal article" date="2003" name="Science">
        <title>Finding functional features in Saccharomyces genomes by phylogenetic footprinting.</title>
        <authorList>
            <person name="Cliften P.F."/>
            <person name="Sudarsanam P."/>
            <person name="Desikan A."/>
            <person name="Fulton L."/>
            <person name="Fulton B."/>
            <person name="Majors J."/>
            <person name="Waterston R."/>
            <person name="Cohen B.A."/>
            <person name="Johnston M."/>
        </authorList>
    </citation>
    <scope>IDENTIFICATION OF PROBABLE INITIATION SITE</scope>
</reference>
<reference key="12">
    <citation type="journal article" date="2015" name="Nat. Commun.">
        <title>Organization of the mitochondrial translation machinery studied in situ by cryoelectron tomography.</title>
        <authorList>
            <person name="Pfeffer S."/>
            <person name="Woellhaf M.W."/>
            <person name="Herrmann J.M."/>
            <person name="Forster F."/>
        </authorList>
    </citation>
    <scope>SUBCELLULAR LOCATION</scope>
</reference>
<reference key="13">
    <citation type="journal article" date="2014" name="Science">
        <title>Structure of the yeast mitochondrial large ribosomal subunit.</title>
        <authorList>
            <person name="Amunts A."/>
            <person name="Brown A."/>
            <person name="Bai X.C."/>
            <person name="Llacer J.L."/>
            <person name="Hussain T."/>
            <person name="Emsley P."/>
            <person name="Long F."/>
            <person name="Murshudov G."/>
            <person name="Scheres S.H."/>
            <person name="Ramakrishnan V."/>
        </authorList>
    </citation>
    <scope>STRUCTURE BY ELECTRON MICROSCOPY (3.20 ANGSTROMS)</scope>
    <scope>SUBUNIT</scope>
</reference>
<organism>
    <name type="scientific">Saccharomyces cerevisiae (strain ATCC 204508 / S288c)</name>
    <name type="common">Baker's yeast</name>
    <dbReference type="NCBI Taxonomy" id="559292"/>
    <lineage>
        <taxon>Eukaryota</taxon>
        <taxon>Fungi</taxon>
        <taxon>Dikarya</taxon>
        <taxon>Ascomycota</taxon>
        <taxon>Saccharomycotina</taxon>
        <taxon>Saccharomycetes</taxon>
        <taxon>Saccharomycetales</taxon>
        <taxon>Saccharomycetaceae</taxon>
        <taxon>Saccharomyces</taxon>
    </lineage>
</organism>
<proteinExistence type="evidence at protein level"/>
<dbReference type="EMBL" id="X77923">
    <property type="protein sequence ID" value="CAA54894.1"/>
    <property type="status" value="ALT_INIT"/>
    <property type="molecule type" value="Genomic_DNA"/>
</dbReference>
<dbReference type="EMBL" id="Z49371">
    <property type="protein sequence ID" value="CAA89390.1"/>
    <property type="status" value="ALT_INIT"/>
    <property type="molecule type" value="Genomic_DNA"/>
</dbReference>
<dbReference type="EMBL" id="AY558305">
    <property type="protein sequence ID" value="AAS56631.1"/>
    <property type="status" value="ALT_INIT"/>
    <property type="molecule type" value="Genomic_DNA"/>
</dbReference>
<dbReference type="EMBL" id="BK006943">
    <property type="protein sequence ID" value="DAA08704.1"/>
    <property type="molecule type" value="Genomic_DNA"/>
</dbReference>
<dbReference type="PIR" id="S50297">
    <property type="entry name" value="S50297"/>
</dbReference>
<dbReference type="RefSeq" id="NP_012439.2">
    <property type="nucleotide sequence ID" value="NM_001181529.1"/>
</dbReference>
<dbReference type="PDB" id="3J6B">
    <property type="method" value="EM"/>
    <property type="resolution" value="3.20 A"/>
    <property type="chains" value="N=1-161"/>
</dbReference>
<dbReference type="PDB" id="5MRC">
    <property type="method" value="EM"/>
    <property type="resolution" value="3.25 A"/>
    <property type="chains" value="N=44-161"/>
</dbReference>
<dbReference type="PDB" id="5MRE">
    <property type="method" value="EM"/>
    <property type="resolution" value="3.75 A"/>
    <property type="chains" value="N=44-161"/>
</dbReference>
<dbReference type="PDB" id="5MRF">
    <property type="method" value="EM"/>
    <property type="resolution" value="4.97 A"/>
    <property type="chains" value="N=44-161"/>
</dbReference>
<dbReference type="PDBsum" id="3J6B"/>
<dbReference type="PDBsum" id="5MRC"/>
<dbReference type="PDBsum" id="5MRE"/>
<dbReference type="PDBsum" id="5MRF"/>
<dbReference type="EMDB" id="EMD-3551"/>
<dbReference type="EMDB" id="EMD-3552"/>
<dbReference type="EMDB" id="EMD-3553"/>
<dbReference type="SMR" id="P40858"/>
<dbReference type="BioGRID" id="33661">
    <property type="interactions" value="123"/>
</dbReference>
<dbReference type="ComplexPortal" id="CPX-1602">
    <property type="entry name" value="54S mitochondrial large ribosomal subunit"/>
</dbReference>
<dbReference type="DIP" id="DIP-5012N"/>
<dbReference type="FunCoup" id="P40858">
    <property type="interactions" value="313"/>
</dbReference>
<dbReference type="IntAct" id="P40858">
    <property type="interactions" value="67"/>
</dbReference>
<dbReference type="STRING" id="4932.YJL096W"/>
<dbReference type="iPTMnet" id="P40858"/>
<dbReference type="PaxDb" id="4932-YJL096W"/>
<dbReference type="PeptideAtlas" id="P40858"/>
<dbReference type="EnsemblFungi" id="YJL096W_mRNA">
    <property type="protein sequence ID" value="YJL096W"/>
    <property type="gene ID" value="YJL096W"/>
</dbReference>
<dbReference type="GeneID" id="853349"/>
<dbReference type="KEGG" id="sce:YJL096W"/>
<dbReference type="AGR" id="SGD:S000003632"/>
<dbReference type="SGD" id="S000003632">
    <property type="gene designation" value="MRPL49"/>
</dbReference>
<dbReference type="VEuPathDB" id="FungiDB:YJL096W"/>
<dbReference type="eggNOG" id="ENOG502S1KI">
    <property type="taxonomic scope" value="Eukaryota"/>
</dbReference>
<dbReference type="HOGENOM" id="CLU_061463_2_1_1"/>
<dbReference type="InParanoid" id="P40858"/>
<dbReference type="OMA" id="ITKEPRY"/>
<dbReference type="OrthoDB" id="5994at2759"/>
<dbReference type="BioCyc" id="YEAST:G3O-31551-MONOMER"/>
<dbReference type="BioGRID-ORCS" id="853349">
    <property type="hits" value="4 hits in 10 CRISPR screens"/>
</dbReference>
<dbReference type="PRO" id="PR:P40858"/>
<dbReference type="Proteomes" id="UP000002311">
    <property type="component" value="Chromosome X"/>
</dbReference>
<dbReference type="RNAct" id="P40858">
    <property type="molecule type" value="protein"/>
</dbReference>
<dbReference type="GO" id="GO:0005743">
    <property type="term" value="C:mitochondrial inner membrane"/>
    <property type="evidence" value="ECO:0000303"/>
    <property type="project" value="ComplexPortal"/>
</dbReference>
<dbReference type="GO" id="GO:0005762">
    <property type="term" value="C:mitochondrial large ribosomal subunit"/>
    <property type="evidence" value="ECO:0000314"/>
    <property type="project" value="SGD"/>
</dbReference>
<dbReference type="GO" id="GO:0005739">
    <property type="term" value="C:mitochondrion"/>
    <property type="evidence" value="ECO:0007005"/>
    <property type="project" value="SGD"/>
</dbReference>
<dbReference type="GO" id="GO:0003735">
    <property type="term" value="F:structural constituent of ribosome"/>
    <property type="evidence" value="ECO:0000314"/>
    <property type="project" value="SGD"/>
</dbReference>
<dbReference type="GO" id="GO:0032543">
    <property type="term" value="P:mitochondrial translation"/>
    <property type="evidence" value="ECO:0000303"/>
    <property type="project" value="ComplexPortal"/>
</dbReference>
<dbReference type="InterPro" id="IPR028909">
    <property type="entry name" value="bL21-like"/>
</dbReference>
<dbReference type="InterPro" id="IPR036164">
    <property type="entry name" value="bL21-like_sf"/>
</dbReference>
<dbReference type="PANTHER" id="PTHR21349">
    <property type="entry name" value="50S RIBOSOMAL PROTEIN L21"/>
    <property type="match status" value="1"/>
</dbReference>
<dbReference type="PANTHER" id="PTHR21349:SF0">
    <property type="entry name" value="LARGE RIBOSOMAL SUBUNIT PROTEIN BL21M"/>
    <property type="match status" value="1"/>
</dbReference>
<dbReference type="Pfam" id="PF00829">
    <property type="entry name" value="Ribosomal_L21p"/>
    <property type="match status" value="1"/>
</dbReference>
<dbReference type="SUPFAM" id="SSF141091">
    <property type="entry name" value="L21p-like"/>
    <property type="match status" value="1"/>
</dbReference>
<evidence type="ECO:0000255" key="1"/>
<evidence type="ECO:0000269" key="2">
    <source>
    </source>
</evidence>
<evidence type="ECO:0000269" key="3">
    <source>
    </source>
</evidence>
<evidence type="ECO:0000269" key="4">
    <source>
    </source>
</evidence>
<evidence type="ECO:0000269" key="5">
    <source>
    </source>
</evidence>
<evidence type="ECO:0000269" key="6">
    <source>
    </source>
</evidence>
<evidence type="ECO:0000269" key="7">
    <source>
    </source>
</evidence>
<evidence type="ECO:0000269" key="8">
    <source>
    </source>
</evidence>
<evidence type="ECO:0000303" key="9">
    <source>
    </source>
</evidence>
<evidence type="ECO:0000305" key="10"/>
<evidence type="ECO:0000305" key="11">
    <source>
    </source>
</evidence>
<evidence type="ECO:0000305" key="12">
    <source>
    </source>
</evidence>
<feature type="transit peptide" description="Mitochondrion" evidence="1">
    <location>
        <begin position="1"/>
        <end position="35"/>
    </location>
</feature>
<feature type="chain" id="PRO_0000030483" description="Large ribosomal subunit protein bL21m">
    <location>
        <begin position="36"/>
        <end position="161"/>
    </location>
</feature>
<feature type="sequence conflict" description="In Ref. 5; AA sequence." evidence="10" ref="5">
    <original>T</original>
    <variation>V</variation>
    <location>
        <position position="115"/>
    </location>
</feature>
<keyword id="KW-0002">3D-structure</keyword>
<keyword id="KW-0903">Direct protein sequencing</keyword>
<keyword id="KW-0496">Mitochondrion</keyword>
<keyword id="KW-1185">Reference proteome</keyword>
<keyword id="KW-0687">Ribonucleoprotein</keyword>
<keyword id="KW-0689">Ribosomal protein</keyword>
<keyword id="KW-0809">Transit peptide</keyword>
<sequence length="161" mass="18387">MLQLKFIWPVARITPIYRPFTSHPFRNLATSSSISSTKAKTTKTDTTPLKLSNELYAIFKIHNRPYLVTEGDRVILPFKLKQAEVGDILNMTDVTTLGSRNYKLVGHPINTSLYTLKATVVGKTKRAFQTREVTKRRNRRVRHAKSKGDLTILRISELSMN</sequence>